<sequence>MEQPGPRAPDPSLCHHNLQPTDDPNWDSYATTMRTAFTPKTGAVPALIRQNGIRRLGYTYSLSDPILNQTQYSDEYTWKSHSKEDLIKTETSRGIKSHKSHLNEDIFLWTLPHCQQTGTLKNCLPWKIPASMKEVNKALSNQFISLTKRDFVDRSKAQKIKKSSHLSLEWKKLLPQPPDTEFRRNYQIPAKIPELQDFSFKYGCYSSLPVASQGLVPSVLHSYLRNQEHTKKQTTYQSDYDKTYPDFLMLLNSFTSSQVKEYLQSLSYKDRQIIDRFIRTHCDTNKKKK</sequence>
<evidence type="ECO:0000256" key="1">
    <source>
        <dbReference type="SAM" id="MobiDB-lite"/>
    </source>
</evidence>
<evidence type="ECO:0000305" key="2">
    <source>
    </source>
</evidence>
<name>TEX26_HUMAN</name>
<keyword id="KW-1267">Proteomics identification</keyword>
<keyword id="KW-1185">Reference proteome</keyword>
<protein>
    <recommendedName>
        <fullName>Testis-expressed protein 26</fullName>
    </recommendedName>
</protein>
<proteinExistence type="evidence at protein level"/>
<feature type="chain" id="PRO_0000263723" description="Testis-expressed protein 26">
    <location>
        <begin position="1"/>
        <end position="289"/>
    </location>
</feature>
<feature type="region of interest" description="Disordered" evidence="1">
    <location>
        <begin position="1"/>
        <end position="26"/>
    </location>
</feature>
<feature type="region of interest" description="Mn 1" evidence="2">
    <location>
        <begin position="30"/>
        <end position="42"/>
    </location>
</feature>
<feature type="region of interest" description="Mn 2" evidence="2">
    <location>
        <begin position="69"/>
        <end position="83"/>
    </location>
</feature>
<feature type="region of interest" description="Mn 3" evidence="2">
    <location>
        <begin position="144"/>
        <end position="157"/>
    </location>
</feature>
<feature type="region of interest" description="Mn 4" evidence="2">
    <location>
        <begin position="179"/>
        <end position="193"/>
    </location>
</feature>
<feature type="region of interest" description="Mn 5" evidence="2">
    <location>
        <begin position="233"/>
        <end position="247"/>
    </location>
</feature>
<feature type="sequence variant" id="VAR_029615" description="In dbSNP:rs9533168.">
    <original>K</original>
    <variation>N</variation>
    <location>
        <position position="231"/>
    </location>
</feature>
<organism>
    <name type="scientific">Homo sapiens</name>
    <name type="common">Human</name>
    <dbReference type="NCBI Taxonomy" id="9606"/>
    <lineage>
        <taxon>Eukaryota</taxon>
        <taxon>Metazoa</taxon>
        <taxon>Chordata</taxon>
        <taxon>Craniata</taxon>
        <taxon>Vertebrata</taxon>
        <taxon>Euteleostomi</taxon>
        <taxon>Mammalia</taxon>
        <taxon>Eutheria</taxon>
        <taxon>Euarchontoglires</taxon>
        <taxon>Primates</taxon>
        <taxon>Haplorrhini</taxon>
        <taxon>Catarrhini</taxon>
        <taxon>Hominidae</taxon>
        <taxon>Homo</taxon>
    </lineage>
</organism>
<gene>
    <name type="primary">TEX26</name>
    <name type="synonym">C13orf26</name>
</gene>
<reference key="1">
    <citation type="journal article" date="2004" name="Nature">
        <title>The DNA sequence and analysis of human chromosome 13.</title>
        <authorList>
            <person name="Dunham A."/>
            <person name="Matthews L.H."/>
            <person name="Burton J."/>
            <person name="Ashurst J.L."/>
            <person name="Howe K.L."/>
            <person name="Ashcroft K.J."/>
            <person name="Beare D.M."/>
            <person name="Burford D.C."/>
            <person name="Hunt S.E."/>
            <person name="Griffiths-Jones S."/>
            <person name="Jones M.C."/>
            <person name="Keenan S.J."/>
            <person name="Oliver K."/>
            <person name="Scott C.E."/>
            <person name="Ainscough R."/>
            <person name="Almeida J.P."/>
            <person name="Ambrose K.D."/>
            <person name="Andrews D.T."/>
            <person name="Ashwell R.I.S."/>
            <person name="Babbage A.K."/>
            <person name="Bagguley C.L."/>
            <person name="Bailey J."/>
            <person name="Bannerjee R."/>
            <person name="Barlow K.F."/>
            <person name="Bates K."/>
            <person name="Beasley H."/>
            <person name="Bird C.P."/>
            <person name="Bray-Allen S."/>
            <person name="Brown A.J."/>
            <person name="Brown J.Y."/>
            <person name="Burrill W."/>
            <person name="Carder C."/>
            <person name="Carter N.P."/>
            <person name="Chapman J.C."/>
            <person name="Clamp M.E."/>
            <person name="Clark S.Y."/>
            <person name="Clarke G."/>
            <person name="Clee C.M."/>
            <person name="Clegg S.C."/>
            <person name="Cobley V."/>
            <person name="Collins J.E."/>
            <person name="Corby N."/>
            <person name="Coville G.J."/>
            <person name="Deloukas P."/>
            <person name="Dhami P."/>
            <person name="Dunham I."/>
            <person name="Dunn M."/>
            <person name="Earthrowl M.E."/>
            <person name="Ellington A.G."/>
            <person name="Faulkner L."/>
            <person name="Frankish A.G."/>
            <person name="Frankland J."/>
            <person name="French L."/>
            <person name="Garner P."/>
            <person name="Garnett J."/>
            <person name="Gilbert J.G.R."/>
            <person name="Gilson C.J."/>
            <person name="Ghori J."/>
            <person name="Grafham D.V."/>
            <person name="Gribble S.M."/>
            <person name="Griffiths C."/>
            <person name="Hall R.E."/>
            <person name="Hammond S."/>
            <person name="Harley J.L."/>
            <person name="Hart E.A."/>
            <person name="Heath P.D."/>
            <person name="Howden P.J."/>
            <person name="Huckle E.J."/>
            <person name="Hunt P.J."/>
            <person name="Hunt A.R."/>
            <person name="Johnson C."/>
            <person name="Johnson D."/>
            <person name="Kay M."/>
            <person name="Kimberley A.M."/>
            <person name="King A."/>
            <person name="Laird G.K."/>
            <person name="Langford C.J."/>
            <person name="Lawlor S."/>
            <person name="Leongamornlert D.A."/>
            <person name="Lloyd D.M."/>
            <person name="Lloyd C."/>
            <person name="Loveland J.E."/>
            <person name="Lovell J."/>
            <person name="Martin S."/>
            <person name="Mashreghi-Mohammadi M."/>
            <person name="McLaren S.J."/>
            <person name="McMurray A."/>
            <person name="Milne S."/>
            <person name="Moore M.J.F."/>
            <person name="Nickerson T."/>
            <person name="Palmer S.A."/>
            <person name="Pearce A.V."/>
            <person name="Peck A.I."/>
            <person name="Pelan S."/>
            <person name="Phillimore B."/>
            <person name="Porter K.M."/>
            <person name="Rice C.M."/>
            <person name="Searle S."/>
            <person name="Sehra H.K."/>
            <person name="Shownkeen R."/>
            <person name="Skuce C.D."/>
            <person name="Smith M."/>
            <person name="Steward C.A."/>
            <person name="Sycamore N."/>
            <person name="Tester J."/>
            <person name="Thomas D.W."/>
            <person name="Tracey A."/>
            <person name="Tromans A."/>
            <person name="Tubby B."/>
            <person name="Wall M."/>
            <person name="Wallis J.M."/>
            <person name="West A.P."/>
            <person name="Whitehead S.L."/>
            <person name="Willey D.L."/>
            <person name="Wilming L."/>
            <person name="Wray P.W."/>
            <person name="Wright M.W."/>
            <person name="Young L."/>
            <person name="Coulson A."/>
            <person name="Durbin R.M."/>
            <person name="Hubbard T."/>
            <person name="Sulston J.E."/>
            <person name="Beck S."/>
            <person name="Bentley D.R."/>
            <person name="Rogers J."/>
            <person name="Ross M.T."/>
        </authorList>
    </citation>
    <scope>NUCLEOTIDE SEQUENCE [LARGE SCALE GENOMIC DNA]</scope>
</reference>
<reference key="2">
    <citation type="journal article" date="2004" name="Genome Res.">
        <title>The status, quality, and expansion of the NIH full-length cDNA project: the Mammalian Gene Collection (MGC).</title>
        <authorList>
            <consortium name="The MGC Project Team"/>
        </authorList>
    </citation>
    <scope>NUCLEOTIDE SEQUENCE [LARGE SCALE MRNA]</scope>
    <source>
        <tissue>Brain</tissue>
    </source>
</reference>
<reference key="3">
    <citation type="journal article" date="2024" name="Nat. Commun.">
        <title>Uncovering structural themes across cilia microtubule inner proteins with implications for human cilia function.</title>
        <authorList>
            <person name="Andersen J.S."/>
            <person name="Vijayakumaran A."/>
            <person name="Godbehere C."/>
            <person name="Lorentzen E."/>
            <person name="Mennella V."/>
            <person name="Schou K.B."/>
        </authorList>
    </citation>
    <scope>IDENTIFICATION OF MN REGIONS</scope>
</reference>
<dbReference type="EMBL" id="AL353680">
    <property type="status" value="NOT_ANNOTATED_CDS"/>
    <property type="molecule type" value="Genomic_DNA"/>
</dbReference>
<dbReference type="EMBL" id="BC030277">
    <property type="protein sequence ID" value="AAH30277.1"/>
    <property type="molecule type" value="mRNA"/>
</dbReference>
<dbReference type="CCDS" id="CCDS9339.1"/>
<dbReference type="RefSeq" id="NP_689538.1">
    <property type="nucleotide sequence ID" value="NM_152325.3"/>
</dbReference>
<dbReference type="SMR" id="Q8N6G2"/>
<dbReference type="BioGRID" id="125758">
    <property type="interactions" value="2"/>
</dbReference>
<dbReference type="FunCoup" id="Q8N6G2">
    <property type="interactions" value="165"/>
</dbReference>
<dbReference type="STRING" id="9606.ENSP00000369840"/>
<dbReference type="GlyGen" id="Q8N6G2">
    <property type="glycosylation" value="3 sites, 1 O-linked glycan (3 sites)"/>
</dbReference>
<dbReference type="iPTMnet" id="Q8N6G2"/>
<dbReference type="PhosphoSitePlus" id="Q8N6G2"/>
<dbReference type="BioMuta" id="TEX26"/>
<dbReference type="DMDM" id="74751054"/>
<dbReference type="jPOST" id="Q8N6G2"/>
<dbReference type="MassIVE" id="Q8N6G2"/>
<dbReference type="PaxDb" id="9606-ENSP00000369840"/>
<dbReference type="PeptideAtlas" id="Q8N6G2"/>
<dbReference type="ProteomicsDB" id="72167"/>
<dbReference type="Antibodypedia" id="49069">
    <property type="antibodies" value="7 antibodies from 5 providers"/>
</dbReference>
<dbReference type="DNASU" id="122046"/>
<dbReference type="Ensembl" id="ENST00000380473.8">
    <property type="protein sequence ID" value="ENSP00000369840.3"/>
    <property type="gene ID" value="ENSG00000175664.10"/>
</dbReference>
<dbReference type="GeneID" id="122046"/>
<dbReference type="KEGG" id="hsa:122046"/>
<dbReference type="MANE-Select" id="ENST00000380473.8">
    <property type="protein sequence ID" value="ENSP00000369840.3"/>
    <property type="RefSeq nucleotide sequence ID" value="NM_152325.3"/>
    <property type="RefSeq protein sequence ID" value="NP_689538.1"/>
</dbReference>
<dbReference type="UCSC" id="uc001uti.4">
    <property type="organism name" value="human"/>
</dbReference>
<dbReference type="AGR" id="HGNC:28622"/>
<dbReference type="CTD" id="122046"/>
<dbReference type="GeneCards" id="TEX26"/>
<dbReference type="HGNC" id="HGNC:28622">
    <property type="gene designation" value="TEX26"/>
</dbReference>
<dbReference type="HPA" id="ENSG00000175664">
    <property type="expression patterns" value="Group enriched (choroid plexus, testis)"/>
</dbReference>
<dbReference type="neXtProt" id="NX_Q8N6G2"/>
<dbReference type="OpenTargets" id="ENSG00000175664"/>
<dbReference type="PharmGKB" id="PA144596482"/>
<dbReference type="VEuPathDB" id="HostDB:ENSG00000175664"/>
<dbReference type="eggNOG" id="ENOG502RY1J">
    <property type="taxonomic scope" value="Eukaryota"/>
</dbReference>
<dbReference type="GeneTree" id="ENSGT00390000009484"/>
<dbReference type="HOGENOM" id="CLU_065377_1_0_1"/>
<dbReference type="InParanoid" id="Q8N6G2"/>
<dbReference type="OMA" id="DTNWDSY"/>
<dbReference type="OrthoDB" id="5984625at2759"/>
<dbReference type="PAN-GO" id="Q8N6G2">
    <property type="GO annotations" value="1 GO annotation based on evolutionary models"/>
</dbReference>
<dbReference type="PhylomeDB" id="Q8N6G2"/>
<dbReference type="TreeFam" id="TF329443"/>
<dbReference type="PathwayCommons" id="Q8N6G2"/>
<dbReference type="SignaLink" id="Q8N6G2"/>
<dbReference type="BioGRID-ORCS" id="122046">
    <property type="hits" value="15 hits in 1139 CRISPR screens"/>
</dbReference>
<dbReference type="ChiTaRS" id="TEX26">
    <property type="organism name" value="human"/>
</dbReference>
<dbReference type="GenomeRNAi" id="122046"/>
<dbReference type="Pharos" id="Q8N6G2">
    <property type="development level" value="Tdark"/>
</dbReference>
<dbReference type="PRO" id="PR:Q8N6G2"/>
<dbReference type="Proteomes" id="UP000005640">
    <property type="component" value="Chromosome 13"/>
</dbReference>
<dbReference type="RNAct" id="Q8N6G2">
    <property type="molecule type" value="protein"/>
</dbReference>
<dbReference type="Bgee" id="ENSG00000175664">
    <property type="expression patterns" value="Expressed in sperm and 100 other cell types or tissues"/>
</dbReference>
<dbReference type="ExpressionAtlas" id="Q8N6G2">
    <property type="expression patterns" value="baseline and differential"/>
</dbReference>
<dbReference type="GO" id="GO:0005737">
    <property type="term" value="C:cytoplasm"/>
    <property type="evidence" value="ECO:0000318"/>
    <property type="project" value="GO_Central"/>
</dbReference>
<dbReference type="InterPro" id="IPR043460">
    <property type="entry name" value="MEDAG/TEX26"/>
</dbReference>
<dbReference type="PANTHER" id="PTHR33769:SF1">
    <property type="entry name" value="TESTIS-EXPRESSED PROTEIN 26"/>
    <property type="match status" value="1"/>
</dbReference>
<dbReference type="PANTHER" id="PTHR33769">
    <property type="entry name" value="TESTIS-EXPRESSED PROTEIN 26 ISOFORM X3"/>
    <property type="match status" value="1"/>
</dbReference>
<accession>Q8N6G2</accession>